<evidence type="ECO:0000255" key="1">
    <source>
        <dbReference type="HAMAP-Rule" id="MF_00268"/>
    </source>
</evidence>
<evidence type="ECO:0000256" key="2">
    <source>
        <dbReference type="SAM" id="MobiDB-lite"/>
    </source>
</evidence>
<proteinExistence type="inferred from homology"/>
<reference key="1">
    <citation type="journal article" date="2008" name="J. Bacteriol.">
        <title>Genome sequence of Staphylococcus aureus strain Newman and comparative analysis of staphylococcal genomes: polymorphism and evolution of two major pathogenicity islands.</title>
        <authorList>
            <person name="Baba T."/>
            <person name="Bae T."/>
            <person name="Schneewind O."/>
            <person name="Takeuchi F."/>
            <person name="Hiramatsu K."/>
        </authorList>
    </citation>
    <scope>NUCLEOTIDE SEQUENCE [LARGE SCALE GENOMIC DNA]</scope>
    <source>
        <strain>Newman</strain>
    </source>
</reference>
<organism>
    <name type="scientific">Staphylococcus aureus (strain Newman)</name>
    <dbReference type="NCBI Taxonomy" id="426430"/>
    <lineage>
        <taxon>Bacteria</taxon>
        <taxon>Bacillati</taxon>
        <taxon>Bacillota</taxon>
        <taxon>Bacilli</taxon>
        <taxon>Bacillales</taxon>
        <taxon>Staphylococcaceae</taxon>
        <taxon>Staphylococcus</taxon>
    </lineage>
</organism>
<feature type="chain" id="PRO_1000071895" description="Protein RecA">
    <location>
        <begin position="1"/>
        <end position="347"/>
    </location>
</feature>
<feature type="region of interest" description="Disordered" evidence="2">
    <location>
        <begin position="325"/>
        <end position="347"/>
    </location>
</feature>
<feature type="compositionally biased region" description="Basic and acidic residues" evidence="2">
    <location>
        <begin position="338"/>
        <end position="347"/>
    </location>
</feature>
<feature type="binding site" evidence="1">
    <location>
        <begin position="65"/>
        <end position="72"/>
    </location>
    <ligand>
        <name>ATP</name>
        <dbReference type="ChEBI" id="CHEBI:30616"/>
    </ligand>
</feature>
<comment type="function">
    <text evidence="1">Can catalyze the hydrolysis of ATP in the presence of single-stranded DNA, the ATP-dependent uptake of single-stranded DNA by duplex DNA, and the ATP-dependent hybridization of homologous single-stranded DNAs. It interacts with LexA causing its activation and leading to its autocatalytic cleavage.</text>
</comment>
<comment type="subcellular location">
    <subcellularLocation>
        <location evidence="1">Cytoplasm</location>
    </subcellularLocation>
</comment>
<comment type="similarity">
    <text evidence="1">Belongs to the RecA family.</text>
</comment>
<gene>
    <name evidence="1" type="primary">recA</name>
    <name type="ordered locus">NWMN_1194</name>
</gene>
<name>RECA_STAAE</name>
<protein>
    <recommendedName>
        <fullName evidence="1">Protein RecA</fullName>
    </recommendedName>
    <alternativeName>
        <fullName evidence="1">Recombinase A</fullName>
    </alternativeName>
</protein>
<keyword id="KW-0067">ATP-binding</keyword>
<keyword id="KW-0963">Cytoplasm</keyword>
<keyword id="KW-0227">DNA damage</keyword>
<keyword id="KW-0233">DNA recombination</keyword>
<keyword id="KW-0234">DNA repair</keyword>
<keyword id="KW-0238">DNA-binding</keyword>
<keyword id="KW-0547">Nucleotide-binding</keyword>
<keyword id="KW-0742">SOS response</keyword>
<accession>A6QGI4</accession>
<sequence>MDNDRQKALDTVIKNMEKSFGKGAVMKLGDNIGRRVSTTSTGSVTLDNALGVGGYPKGRIIEIYGPESSGKTTVALHAIAEVQSNGGVAAFIDAEHALDPEYAQALGVDIDNLYLSQPDHGEQGLEIAEAFVRSGAVDIVVVDSVAALTPKAEIEGEMGDTHVGLQARLMSQALRKLSGAISKSNTTAIFINQIREKVGVMFGNPETTPGGRALKFYSSVRLEVRRAEQLKQGQEIVGNRTKIKVVKNKVAPPFRVAEVDIMYGQGISKEGELIDLGVENDIVDKSGAWYSYNGERMGQGKENVKMYLKENPQIKEEIDRKLREKLGISDGDVEETEDAPKSLFDEE</sequence>
<dbReference type="EMBL" id="AP009351">
    <property type="protein sequence ID" value="BAF67466.1"/>
    <property type="molecule type" value="Genomic_DNA"/>
</dbReference>
<dbReference type="RefSeq" id="WP_000368166.1">
    <property type="nucleotide sequence ID" value="NZ_JBBIAE010000001.1"/>
</dbReference>
<dbReference type="SMR" id="A6QGI4"/>
<dbReference type="KEGG" id="sae:NWMN_1194"/>
<dbReference type="HOGENOM" id="CLU_040469_1_2_9"/>
<dbReference type="Proteomes" id="UP000006386">
    <property type="component" value="Chromosome"/>
</dbReference>
<dbReference type="GO" id="GO:0005829">
    <property type="term" value="C:cytosol"/>
    <property type="evidence" value="ECO:0007669"/>
    <property type="project" value="TreeGrafter"/>
</dbReference>
<dbReference type="GO" id="GO:0005524">
    <property type="term" value="F:ATP binding"/>
    <property type="evidence" value="ECO:0007669"/>
    <property type="project" value="UniProtKB-UniRule"/>
</dbReference>
<dbReference type="GO" id="GO:0016887">
    <property type="term" value="F:ATP hydrolysis activity"/>
    <property type="evidence" value="ECO:0007669"/>
    <property type="project" value="InterPro"/>
</dbReference>
<dbReference type="GO" id="GO:0140664">
    <property type="term" value="F:ATP-dependent DNA damage sensor activity"/>
    <property type="evidence" value="ECO:0007669"/>
    <property type="project" value="InterPro"/>
</dbReference>
<dbReference type="GO" id="GO:0003684">
    <property type="term" value="F:damaged DNA binding"/>
    <property type="evidence" value="ECO:0007669"/>
    <property type="project" value="UniProtKB-UniRule"/>
</dbReference>
<dbReference type="GO" id="GO:0003697">
    <property type="term" value="F:single-stranded DNA binding"/>
    <property type="evidence" value="ECO:0007669"/>
    <property type="project" value="UniProtKB-UniRule"/>
</dbReference>
<dbReference type="GO" id="GO:0006310">
    <property type="term" value="P:DNA recombination"/>
    <property type="evidence" value="ECO:0007669"/>
    <property type="project" value="UniProtKB-UniRule"/>
</dbReference>
<dbReference type="GO" id="GO:0006281">
    <property type="term" value="P:DNA repair"/>
    <property type="evidence" value="ECO:0007669"/>
    <property type="project" value="UniProtKB-UniRule"/>
</dbReference>
<dbReference type="GO" id="GO:0009432">
    <property type="term" value="P:SOS response"/>
    <property type="evidence" value="ECO:0007669"/>
    <property type="project" value="UniProtKB-UniRule"/>
</dbReference>
<dbReference type="CDD" id="cd00983">
    <property type="entry name" value="RecA"/>
    <property type="match status" value="1"/>
</dbReference>
<dbReference type="FunFam" id="3.40.50.300:FF:000087">
    <property type="entry name" value="Recombinase RecA"/>
    <property type="match status" value="1"/>
</dbReference>
<dbReference type="Gene3D" id="3.40.50.300">
    <property type="entry name" value="P-loop containing nucleotide triphosphate hydrolases"/>
    <property type="match status" value="1"/>
</dbReference>
<dbReference type="HAMAP" id="MF_00268">
    <property type="entry name" value="RecA"/>
    <property type="match status" value="1"/>
</dbReference>
<dbReference type="InterPro" id="IPR003593">
    <property type="entry name" value="AAA+_ATPase"/>
</dbReference>
<dbReference type="InterPro" id="IPR013765">
    <property type="entry name" value="DNA_recomb/repair_RecA"/>
</dbReference>
<dbReference type="InterPro" id="IPR020584">
    <property type="entry name" value="DNA_recomb/repair_RecA_CS"/>
</dbReference>
<dbReference type="InterPro" id="IPR027417">
    <property type="entry name" value="P-loop_NTPase"/>
</dbReference>
<dbReference type="InterPro" id="IPR049261">
    <property type="entry name" value="RecA-like_C"/>
</dbReference>
<dbReference type="InterPro" id="IPR049428">
    <property type="entry name" value="RecA-like_N"/>
</dbReference>
<dbReference type="InterPro" id="IPR020588">
    <property type="entry name" value="RecA_ATP-bd"/>
</dbReference>
<dbReference type="InterPro" id="IPR023400">
    <property type="entry name" value="RecA_C_sf"/>
</dbReference>
<dbReference type="InterPro" id="IPR020587">
    <property type="entry name" value="RecA_monomer-monomer_interface"/>
</dbReference>
<dbReference type="NCBIfam" id="TIGR02012">
    <property type="entry name" value="tigrfam_recA"/>
    <property type="match status" value="1"/>
</dbReference>
<dbReference type="PANTHER" id="PTHR45900:SF1">
    <property type="entry name" value="MITOCHONDRIAL DNA REPAIR PROTEIN RECA HOMOLOG-RELATED"/>
    <property type="match status" value="1"/>
</dbReference>
<dbReference type="PANTHER" id="PTHR45900">
    <property type="entry name" value="RECA"/>
    <property type="match status" value="1"/>
</dbReference>
<dbReference type="Pfam" id="PF00154">
    <property type="entry name" value="RecA"/>
    <property type="match status" value="1"/>
</dbReference>
<dbReference type="Pfam" id="PF21096">
    <property type="entry name" value="RecA_C"/>
    <property type="match status" value="1"/>
</dbReference>
<dbReference type="PRINTS" id="PR00142">
    <property type="entry name" value="RECA"/>
</dbReference>
<dbReference type="SMART" id="SM00382">
    <property type="entry name" value="AAA"/>
    <property type="match status" value="1"/>
</dbReference>
<dbReference type="SUPFAM" id="SSF52540">
    <property type="entry name" value="P-loop containing nucleoside triphosphate hydrolases"/>
    <property type="match status" value="1"/>
</dbReference>
<dbReference type="SUPFAM" id="SSF54752">
    <property type="entry name" value="RecA protein, C-terminal domain"/>
    <property type="match status" value="1"/>
</dbReference>
<dbReference type="PROSITE" id="PS00321">
    <property type="entry name" value="RECA_1"/>
    <property type="match status" value="1"/>
</dbReference>
<dbReference type="PROSITE" id="PS50162">
    <property type="entry name" value="RECA_2"/>
    <property type="match status" value="1"/>
</dbReference>
<dbReference type="PROSITE" id="PS50163">
    <property type="entry name" value="RECA_3"/>
    <property type="match status" value="1"/>
</dbReference>